<keyword id="KW-1185">Reference proteome</keyword>
<keyword id="KW-0346">Stress response</keyword>
<keyword id="KW-0808">Transferase</keyword>
<protein>
    <recommendedName>
        <fullName>Probable glutathione S-transferase GSTU6</fullName>
        <ecNumber>2.5.1.18</ecNumber>
    </recommendedName>
    <alternativeName>
        <fullName>28 kDa cold-induced protein</fullName>
    </alternativeName>
</protein>
<dbReference type="EC" id="2.5.1.18"/>
<dbReference type="EMBL" id="D10861">
    <property type="protein sequence ID" value="BAA01632.1"/>
    <property type="status" value="ALT_FRAME"/>
    <property type="molecule type" value="mRNA"/>
</dbReference>
<dbReference type="EMBL" id="AF309376">
    <property type="protein sequence ID" value="AAG32469.1"/>
    <property type="molecule type" value="mRNA"/>
</dbReference>
<dbReference type="EMBL" id="AC113948">
    <property type="protein sequence ID" value="AAM94535.1"/>
    <property type="molecule type" value="Genomic_DNA"/>
</dbReference>
<dbReference type="EMBL" id="DP000086">
    <property type="protein sequence ID" value="AAP54769.1"/>
    <property type="molecule type" value="Genomic_DNA"/>
</dbReference>
<dbReference type="EMBL" id="AP008216">
    <property type="protein sequence ID" value="BAF27055.1"/>
    <property type="molecule type" value="Genomic_DNA"/>
</dbReference>
<dbReference type="EMBL" id="AP014966">
    <property type="protein sequence ID" value="BAT11780.1"/>
    <property type="molecule type" value="Genomic_DNA"/>
</dbReference>
<dbReference type="EMBL" id="AK059760">
    <property type="protein sequence ID" value="BAG87108.1"/>
    <property type="molecule type" value="mRNA"/>
</dbReference>
<dbReference type="EMBL" id="AK103699">
    <property type="protein sequence ID" value="BAG96210.1"/>
    <property type="molecule type" value="mRNA"/>
</dbReference>
<dbReference type="RefSeq" id="XP_015614356.1">
    <property type="nucleotide sequence ID" value="XM_015758870.1"/>
</dbReference>
<dbReference type="SMR" id="Q06398"/>
<dbReference type="FunCoup" id="Q06398">
    <property type="interactions" value="394"/>
</dbReference>
<dbReference type="STRING" id="39947.Q06398"/>
<dbReference type="PaxDb" id="39947-Q06398"/>
<dbReference type="EnsemblPlants" id="Os10t0530900-01">
    <property type="protein sequence ID" value="Os10t0530900-01"/>
    <property type="gene ID" value="Os10g0530900"/>
</dbReference>
<dbReference type="Gramene" id="Os10t0530900-01">
    <property type="protein sequence ID" value="Os10t0530900-01"/>
    <property type="gene ID" value="Os10g0530900"/>
</dbReference>
<dbReference type="KEGG" id="dosa:Os10g0530900"/>
<dbReference type="eggNOG" id="KOG0406">
    <property type="taxonomic scope" value="Eukaryota"/>
</dbReference>
<dbReference type="HOGENOM" id="CLU_011226_18_0_1"/>
<dbReference type="InParanoid" id="Q06398"/>
<dbReference type="OMA" id="KVRSAWL"/>
<dbReference type="OrthoDB" id="4951845at2759"/>
<dbReference type="Proteomes" id="UP000000763">
    <property type="component" value="Chromosome 10"/>
</dbReference>
<dbReference type="Proteomes" id="UP000059680">
    <property type="component" value="Chromosome 10"/>
</dbReference>
<dbReference type="ExpressionAtlas" id="Q06398">
    <property type="expression patterns" value="baseline and differential"/>
</dbReference>
<dbReference type="GO" id="GO:0005737">
    <property type="term" value="C:cytoplasm"/>
    <property type="evidence" value="ECO:0000318"/>
    <property type="project" value="GO_Central"/>
</dbReference>
<dbReference type="GO" id="GO:0004364">
    <property type="term" value="F:glutathione transferase activity"/>
    <property type="evidence" value="ECO:0000318"/>
    <property type="project" value="GO_Central"/>
</dbReference>
<dbReference type="GO" id="GO:0006749">
    <property type="term" value="P:glutathione metabolic process"/>
    <property type="evidence" value="ECO:0000318"/>
    <property type="project" value="GO_Central"/>
</dbReference>
<dbReference type="CDD" id="cd03185">
    <property type="entry name" value="GST_C_Tau"/>
    <property type="match status" value="1"/>
</dbReference>
<dbReference type="CDD" id="cd03058">
    <property type="entry name" value="GST_N_Tau"/>
    <property type="match status" value="1"/>
</dbReference>
<dbReference type="FunFam" id="3.40.30.10:FF:000044">
    <property type="entry name" value="Glutathione S-transferase GSTU6"/>
    <property type="match status" value="1"/>
</dbReference>
<dbReference type="FunFam" id="1.20.1050.10:FF:000023">
    <property type="entry name" value="Probable glutathione S-transferase GSTU6"/>
    <property type="match status" value="1"/>
</dbReference>
<dbReference type="Gene3D" id="1.20.1050.10">
    <property type="match status" value="1"/>
</dbReference>
<dbReference type="Gene3D" id="3.40.30.10">
    <property type="entry name" value="Glutaredoxin"/>
    <property type="match status" value="1"/>
</dbReference>
<dbReference type="InterPro" id="IPR010987">
    <property type="entry name" value="Glutathione-S-Trfase_C-like"/>
</dbReference>
<dbReference type="InterPro" id="IPR036282">
    <property type="entry name" value="Glutathione-S-Trfase_C_sf"/>
</dbReference>
<dbReference type="InterPro" id="IPR040079">
    <property type="entry name" value="Glutathione_S-Trfase"/>
</dbReference>
<dbReference type="InterPro" id="IPR004045">
    <property type="entry name" value="Glutathione_S-Trfase_N"/>
</dbReference>
<dbReference type="InterPro" id="IPR045074">
    <property type="entry name" value="GST_C_Tau"/>
</dbReference>
<dbReference type="InterPro" id="IPR045073">
    <property type="entry name" value="Omega/Tau-like"/>
</dbReference>
<dbReference type="InterPro" id="IPR036249">
    <property type="entry name" value="Thioredoxin-like_sf"/>
</dbReference>
<dbReference type="PANTHER" id="PTHR11260:SF326">
    <property type="entry name" value="GLUTATHIONE S-TRANSFERASE GSTU6-RELATED"/>
    <property type="match status" value="1"/>
</dbReference>
<dbReference type="PANTHER" id="PTHR11260">
    <property type="entry name" value="GLUTATHIONE S-TRANSFERASE, GST, SUPERFAMILY, GST DOMAIN CONTAINING"/>
    <property type="match status" value="1"/>
</dbReference>
<dbReference type="Pfam" id="PF13410">
    <property type="entry name" value="GST_C_2"/>
    <property type="match status" value="1"/>
</dbReference>
<dbReference type="Pfam" id="PF13417">
    <property type="entry name" value="GST_N_3"/>
    <property type="match status" value="1"/>
</dbReference>
<dbReference type="SFLD" id="SFLDS00019">
    <property type="entry name" value="Glutathione_Transferase_(cytos"/>
    <property type="match status" value="1"/>
</dbReference>
<dbReference type="SFLD" id="SFLDG01152">
    <property type="entry name" value="Main.3:_Omega-_and_Tau-like"/>
    <property type="match status" value="1"/>
</dbReference>
<dbReference type="SUPFAM" id="SSF47616">
    <property type="entry name" value="GST C-terminal domain-like"/>
    <property type="match status" value="1"/>
</dbReference>
<dbReference type="SUPFAM" id="SSF52833">
    <property type="entry name" value="Thioredoxin-like"/>
    <property type="match status" value="1"/>
</dbReference>
<dbReference type="PROSITE" id="PS50405">
    <property type="entry name" value="GST_CTER"/>
    <property type="match status" value="1"/>
</dbReference>
<dbReference type="PROSITE" id="PS50404">
    <property type="entry name" value="GST_NTER"/>
    <property type="match status" value="1"/>
</dbReference>
<organism>
    <name type="scientific">Oryza sativa subsp. japonica</name>
    <name type="common">Rice</name>
    <dbReference type="NCBI Taxonomy" id="39947"/>
    <lineage>
        <taxon>Eukaryota</taxon>
        <taxon>Viridiplantae</taxon>
        <taxon>Streptophyta</taxon>
        <taxon>Embryophyta</taxon>
        <taxon>Tracheophyta</taxon>
        <taxon>Spermatophyta</taxon>
        <taxon>Magnoliopsida</taxon>
        <taxon>Liliopsida</taxon>
        <taxon>Poales</taxon>
        <taxon>Poaceae</taxon>
        <taxon>BOP clade</taxon>
        <taxon>Oryzoideae</taxon>
        <taxon>Oryzeae</taxon>
        <taxon>Oryzinae</taxon>
        <taxon>Oryza</taxon>
        <taxon>Oryza sativa</taxon>
    </lineage>
</organism>
<reference key="1">
    <citation type="journal article" date="1992" name="Plant Physiol.">
        <title>Molecular cloning and characterization of genes related to chilling tolerance in rice.</title>
        <authorList>
            <person name="Binh L.T."/>
            <person name="Oono K."/>
        </authorList>
    </citation>
    <scope>NUCLEOTIDE SEQUENCE [MRNA]</scope>
    <source>
        <strain>cv. Nipponbare</strain>
        <tissue>Seedling</tissue>
    </source>
</reference>
<reference key="2">
    <citation type="journal article" date="2004" name="Mol. Genet. Genomics">
        <title>Organisation and structural evolution of the rice glutathione S-transferase gene family.</title>
        <authorList>
            <person name="Soranzo N."/>
            <person name="Sari Gorla M."/>
            <person name="Mizzi L."/>
            <person name="De Toma G."/>
            <person name="Frova C."/>
        </authorList>
    </citation>
    <scope>NUCLEOTIDE SEQUENCE [MRNA]</scope>
    <scope>NOMENCLATURE</scope>
</reference>
<reference key="3">
    <citation type="journal article" date="2003" name="Science">
        <title>In-depth view of structure, activity, and evolution of rice chromosome 10.</title>
        <authorList>
            <person name="Yu Y."/>
            <person name="Rambo T."/>
            <person name="Currie J."/>
            <person name="Saski C."/>
            <person name="Kim H.-R."/>
            <person name="Collura K."/>
            <person name="Thompson S."/>
            <person name="Simmons J."/>
            <person name="Yang T.-J."/>
            <person name="Nah G."/>
            <person name="Patel A.J."/>
            <person name="Thurmond S."/>
            <person name="Henry D."/>
            <person name="Oates R."/>
            <person name="Palmer M."/>
            <person name="Pries G."/>
            <person name="Gibson J."/>
            <person name="Anderson H."/>
            <person name="Paradkar M."/>
            <person name="Crane L."/>
            <person name="Dale J."/>
            <person name="Carver M.B."/>
            <person name="Wood T."/>
            <person name="Frisch D."/>
            <person name="Engler F."/>
            <person name="Soderlund C."/>
            <person name="Palmer L.E."/>
            <person name="Teytelman L."/>
            <person name="Nascimento L."/>
            <person name="De la Bastide M."/>
            <person name="Spiegel L."/>
            <person name="Ware D."/>
            <person name="O'Shaughnessy A."/>
            <person name="Dike S."/>
            <person name="Dedhia N."/>
            <person name="Preston R."/>
            <person name="Huang E."/>
            <person name="Ferraro K."/>
            <person name="Kuit K."/>
            <person name="Miller B."/>
            <person name="Zutavern T."/>
            <person name="Katzenberger F."/>
            <person name="Muller S."/>
            <person name="Balija V."/>
            <person name="Martienssen R.A."/>
            <person name="Stein L."/>
            <person name="Minx P."/>
            <person name="Johnson D."/>
            <person name="Cordum H."/>
            <person name="Mardis E."/>
            <person name="Cheng Z."/>
            <person name="Jiang J."/>
            <person name="Wilson R."/>
            <person name="McCombie W.R."/>
            <person name="Wing R.A."/>
            <person name="Yuan Q."/>
            <person name="Ouyang S."/>
            <person name="Liu J."/>
            <person name="Jones K.M."/>
            <person name="Gansberger K."/>
            <person name="Moffat K."/>
            <person name="Hill J."/>
            <person name="Tsitrin T."/>
            <person name="Overton L."/>
            <person name="Bera J."/>
            <person name="Kim M."/>
            <person name="Jin S."/>
            <person name="Tallon L."/>
            <person name="Ciecko A."/>
            <person name="Pai G."/>
            <person name="Van Aken S."/>
            <person name="Utterback T."/>
            <person name="Reidmuller S."/>
            <person name="Bormann J."/>
            <person name="Feldblyum T."/>
            <person name="Hsiao J."/>
            <person name="Zismann V."/>
            <person name="Blunt S."/>
            <person name="de Vazeille A.R."/>
            <person name="Shaffer T."/>
            <person name="Koo H."/>
            <person name="Suh B."/>
            <person name="Yang Q."/>
            <person name="Haas B."/>
            <person name="Peterson J."/>
            <person name="Pertea M."/>
            <person name="Volfovsky N."/>
            <person name="Wortman J."/>
            <person name="White O."/>
            <person name="Salzberg S.L."/>
            <person name="Fraser C.M."/>
            <person name="Buell C.R."/>
            <person name="Messing J."/>
            <person name="Song R."/>
            <person name="Fuks G."/>
            <person name="Llaca V."/>
            <person name="Kovchak S."/>
            <person name="Young S."/>
            <person name="Bowers J.E."/>
            <person name="Paterson A.H."/>
            <person name="Johns M.A."/>
            <person name="Mao L."/>
            <person name="Pan H."/>
            <person name="Dean R.A."/>
        </authorList>
    </citation>
    <scope>NUCLEOTIDE SEQUENCE [LARGE SCALE GENOMIC DNA]</scope>
    <source>
        <strain>cv. Nipponbare</strain>
    </source>
</reference>
<reference key="4">
    <citation type="journal article" date="2005" name="Nature">
        <title>The map-based sequence of the rice genome.</title>
        <authorList>
            <consortium name="International rice genome sequencing project (IRGSP)"/>
        </authorList>
    </citation>
    <scope>NUCLEOTIDE SEQUENCE [LARGE SCALE GENOMIC DNA]</scope>
    <source>
        <strain>cv. Nipponbare</strain>
    </source>
</reference>
<reference key="5">
    <citation type="journal article" date="2008" name="Nucleic Acids Res.">
        <title>The rice annotation project database (RAP-DB): 2008 update.</title>
        <authorList>
            <consortium name="The rice annotation project (RAP)"/>
        </authorList>
    </citation>
    <scope>GENOME REANNOTATION</scope>
    <source>
        <strain>cv. Nipponbare</strain>
    </source>
</reference>
<reference key="6">
    <citation type="journal article" date="2013" name="Rice">
        <title>Improvement of the Oryza sativa Nipponbare reference genome using next generation sequence and optical map data.</title>
        <authorList>
            <person name="Kawahara Y."/>
            <person name="de la Bastide M."/>
            <person name="Hamilton J.P."/>
            <person name="Kanamori H."/>
            <person name="McCombie W.R."/>
            <person name="Ouyang S."/>
            <person name="Schwartz D.C."/>
            <person name="Tanaka T."/>
            <person name="Wu J."/>
            <person name="Zhou S."/>
            <person name="Childs K.L."/>
            <person name="Davidson R.M."/>
            <person name="Lin H."/>
            <person name="Quesada-Ocampo L."/>
            <person name="Vaillancourt B."/>
            <person name="Sakai H."/>
            <person name="Lee S.S."/>
            <person name="Kim J."/>
            <person name="Numa H."/>
            <person name="Itoh T."/>
            <person name="Buell C.R."/>
            <person name="Matsumoto T."/>
        </authorList>
    </citation>
    <scope>GENOME REANNOTATION</scope>
    <source>
        <strain>cv. Nipponbare</strain>
    </source>
</reference>
<reference key="7">
    <citation type="journal article" date="2003" name="Science">
        <title>Collection, mapping, and annotation of over 28,000 cDNA clones from japonica rice.</title>
        <authorList>
            <consortium name="The rice full-length cDNA consortium"/>
        </authorList>
    </citation>
    <scope>NUCLEOTIDE SEQUENCE [LARGE SCALE MRNA]</scope>
    <source>
        <strain>cv. Nipponbare</strain>
    </source>
</reference>
<comment type="function">
    <text>Conjugation of reduced glutathione to a wide number of exogenous and endogenous hydrophobic electrophiles.</text>
</comment>
<comment type="catalytic activity">
    <reaction>
        <text>RX + glutathione = an S-substituted glutathione + a halide anion + H(+)</text>
        <dbReference type="Rhea" id="RHEA:16437"/>
        <dbReference type="ChEBI" id="CHEBI:15378"/>
        <dbReference type="ChEBI" id="CHEBI:16042"/>
        <dbReference type="ChEBI" id="CHEBI:17792"/>
        <dbReference type="ChEBI" id="CHEBI:57925"/>
        <dbReference type="ChEBI" id="CHEBI:90779"/>
        <dbReference type="EC" id="2.5.1.18"/>
    </reaction>
</comment>
<comment type="tissue specificity">
    <text>Expressed in seedling shoots and roots.</text>
</comment>
<comment type="induction">
    <text>By cold stress.</text>
</comment>
<comment type="similarity">
    <text evidence="2">Belongs to the GST superfamily. Tau family.</text>
</comment>
<comment type="sequence caution" evidence="2">
    <conflict type="frameshift">
        <sequence resource="EMBL-CDS" id="BAA01632"/>
    </conflict>
</comment>
<accession>Q06398</accession>
<accession>B7E411</accession>
<accession>Q0IW60</accession>
<accession>Q9FUE6</accession>
<evidence type="ECO:0000250" key="1"/>
<evidence type="ECO:0000305" key="2"/>
<feature type="chain" id="PRO_0000185870" description="Probable glutathione S-transferase GSTU6">
    <location>
        <begin position="1"/>
        <end position="236"/>
    </location>
</feature>
<feature type="domain" description="GST N-terminal">
    <location>
        <begin position="5"/>
        <end position="84"/>
    </location>
</feature>
<feature type="domain" description="GST C-terminal">
    <location>
        <begin position="94"/>
        <end position="228"/>
    </location>
</feature>
<feature type="binding site" evidence="1">
    <location>
        <position position="15"/>
    </location>
    <ligand>
        <name>glutathione</name>
        <dbReference type="ChEBI" id="CHEBI:57925"/>
    </ligand>
</feature>
<feature type="binding site" evidence="1">
    <location>
        <position position="42"/>
    </location>
    <ligand>
        <name>glutathione</name>
        <dbReference type="ChEBI" id="CHEBI:57925"/>
    </ligand>
</feature>
<feature type="binding site" evidence="1">
    <location>
        <position position="56"/>
    </location>
    <ligand>
        <name>glutathione</name>
        <dbReference type="ChEBI" id="CHEBI:57925"/>
    </ligand>
</feature>
<feature type="binding site" evidence="1">
    <location>
        <begin position="68"/>
        <end position="69"/>
    </location>
    <ligand>
        <name>glutathione</name>
        <dbReference type="ChEBI" id="CHEBI:57925"/>
    </ligand>
</feature>
<feature type="sequence conflict" description="In Ref. 1; BAA01632." evidence="2" ref="1">
    <location>
        <position position="65"/>
    </location>
</feature>
<feature type="sequence conflict" description="In Ref. 1; BAA01632." evidence="2" ref="1">
    <original>GAGGRP</original>
    <variation>RAGR</variation>
    <location>
        <begin position="83"/>
        <end position="88"/>
    </location>
</feature>
<feature type="sequence conflict" description="In Ref. 1; BAA01632." evidence="2" ref="1">
    <original>AVARF</original>
    <variation>VL</variation>
    <location>
        <begin position="99"/>
        <end position="103"/>
    </location>
</feature>
<feature type="sequence conflict" description="In Ref. 1; BAA01632." evidence="2" ref="1">
    <location>
        <position position="118"/>
    </location>
</feature>
<feature type="sequence conflict" description="In Ref. 1; BAA01632." evidence="2" ref="1">
    <original>T</original>
    <variation>M</variation>
    <location>
        <position position="125"/>
    </location>
</feature>
<feature type="sequence conflict" description="In Ref. 1; BAA01632." evidence="2" ref="1">
    <original>QAVAALETL</original>
    <variation>RRGGVETV</variation>
    <location>
        <begin position="135"/>
        <end position="143"/>
    </location>
</feature>
<feature type="sequence conflict" description="In Ref. 1; BAA01632." evidence="2" ref="1">
    <original>GGDGV</original>
    <variation>ARRR</variation>
    <location>
        <begin position="158"/>
        <end position="162"/>
    </location>
</feature>
<feature type="sequence conflict" description="In Ref. 1; BAA01632." evidence="2" ref="1">
    <original>V</original>
    <variation>VV</variation>
    <location>
        <position position="168"/>
    </location>
</feature>
<feature type="sequence conflict" description="In Ref. 1; BAA01632." evidence="2" ref="1">
    <location>
        <position position="184"/>
    </location>
</feature>
<feature type="sequence conflict" description="In Ref. 1; BAA01632." evidence="2" ref="1">
    <original>PA</original>
    <variation>SS</variation>
    <location>
        <begin position="194"/>
        <end position="195"/>
    </location>
</feature>
<feature type="sequence conflict" description="In Ref. 1; BAA01632." evidence="2" ref="1">
    <original>FRATDAAKGVVPDD</original>
    <variation>STHRLQCVDVPMT</variation>
    <location>
        <begin position="203"/>
        <end position="216"/>
    </location>
</feature>
<sequence length="236" mass="25656">MAGSGELKLLGVWSSPYAIRVRVVLNLKSLPYEYVEENLGDKSDLLLASNPVHKSVPVLLHAGRPVNESQVIVQYIDEVWPGGAGGRPSVMPSDPYERAVARFWAAYVDDKVRPAWLAILFGSKTEEERAAAVAQAVAALETLEGAFGECSKGKPFFGGDGVGFVDVVLGGYLGWFTAIDKLIGRRLIDPARTPALAAWEERFRATDAAKGVVPDDADKLLEFRQTLLRWSASKAK</sequence>
<name>GSTU6_ORYSJ</name>
<proteinExistence type="evidence at transcript level"/>
<gene>
    <name type="primary">GSTU6</name>
    <name type="ordered locus">Os10g0530900</name>
    <name type="ordered locus">LOC_Os10g38740</name>
    <name type="ORF">OSJNBb0038A07.2</name>
</gene>